<sequence>MTTEPKDPVADLAPEPAVPSLVDRYFTRWYKADVKGKPCEDHCILQHSNRICVITLAGSHPVLQSGKTIKSISYQISTNCSRLQNKVSGKFKRGAQFLTELAPLCKIYCSDGEEYTISSCVRGRLMEVNENILHKPSILQEKPSTEGYIAVVLPKFEESKSITEGLLTQKEYEEVVVKRLRATTAAS</sequence>
<proteinExistence type="evidence at transcript level"/>
<reference key="1">
    <citation type="submission" date="2006-02" db="EMBL/GenBank/DDBJ databases">
        <authorList>
            <consortium name="NIH - Mammalian Gene Collection (MGC) project"/>
        </authorList>
    </citation>
    <scope>NUCLEOTIDE SEQUENCE [LARGE SCALE MRNA]</scope>
    <source>
        <strain>Hereford</strain>
        <tissue>Uterus</tissue>
    </source>
</reference>
<comment type="function">
    <text evidence="1">Actin-binding protein that regulates actin polymerization, filopodia dynamics and increases the branching of proximal dendrites of developing neurons. May play a role in transcription regulation.</text>
</comment>
<comment type="subunit">
    <text evidence="1">Interacts with F-actin (By similarity). Interacts with G-actin (By similarity).</text>
</comment>
<comment type="subcellular location">
    <subcellularLocation>
        <location evidence="1">Nucleus speckle</location>
    </subcellularLocation>
    <subcellularLocation>
        <location evidence="1">Cell projection</location>
        <location evidence="1">Lamellipodium</location>
    </subcellularLocation>
    <subcellularLocation>
        <location evidence="1">Nucleus</location>
    </subcellularLocation>
    <subcellularLocation>
        <location evidence="1">Cell projection</location>
        <location evidence="1">Growth cone</location>
    </subcellularLocation>
    <subcellularLocation>
        <location evidence="1">Cell projection</location>
        <location evidence="1">Dendrite</location>
    </subcellularLocation>
    <text evidence="1">Localizes to somata and dendrites in cortical neurons. Colocalizes with F- and G-actin in lamellipodia (By similarity). Colocalizes in the nucleus with PTK2 (By similarity).</text>
</comment>
<comment type="similarity">
    <text evidence="2">Belongs to the ABITRAM family.</text>
</comment>
<dbReference type="EMBL" id="BC113223">
    <property type="protein sequence ID" value="AAI13224.1"/>
    <property type="molecule type" value="mRNA"/>
</dbReference>
<dbReference type="RefSeq" id="NP_001039421.1">
    <property type="nucleotide sequence ID" value="NM_001045956.1"/>
</dbReference>
<dbReference type="SMR" id="Q29S16"/>
<dbReference type="FunCoup" id="Q29S16">
    <property type="interactions" value="3720"/>
</dbReference>
<dbReference type="STRING" id="9913.ENSBTAP00000006575"/>
<dbReference type="PaxDb" id="9913-ENSBTAP00000006575"/>
<dbReference type="GeneID" id="507081"/>
<dbReference type="KEGG" id="bta:507081"/>
<dbReference type="CTD" id="54942"/>
<dbReference type="VEuPathDB" id="HostDB:ENSBTAG00000004996"/>
<dbReference type="eggNOG" id="KOG3266">
    <property type="taxonomic scope" value="Eukaryota"/>
</dbReference>
<dbReference type="HOGENOM" id="CLU_107323_1_0_1"/>
<dbReference type="InParanoid" id="Q29S16"/>
<dbReference type="OMA" id="GKACEDH"/>
<dbReference type="OrthoDB" id="48130at2759"/>
<dbReference type="TreeFam" id="TF313930"/>
<dbReference type="Proteomes" id="UP000009136">
    <property type="component" value="Chromosome 8"/>
</dbReference>
<dbReference type="Bgee" id="ENSBTAG00000004996">
    <property type="expression patterns" value="Expressed in oocyte and 103 other cell types or tissues"/>
</dbReference>
<dbReference type="GO" id="GO:0030425">
    <property type="term" value="C:dendrite"/>
    <property type="evidence" value="ECO:0000318"/>
    <property type="project" value="GO_Central"/>
</dbReference>
<dbReference type="GO" id="GO:0032433">
    <property type="term" value="C:filopodium tip"/>
    <property type="evidence" value="ECO:0000250"/>
    <property type="project" value="UniProtKB"/>
</dbReference>
<dbReference type="GO" id="GO:0030426">
    <property type="term" value="C:growth cone"/>
    <property type="evidence" value="ECO:0000250"/>
    <property type="project" value="UniProtKB"/>
</dbReference>
<dbReference type="GO" id="GO:0030027">
    <property type="term" value="C:lamellipodium"/>
    <property type="evidence" value="ECO:0000250"/>
    <property type="project" value="UniProtKB"/>
</dbReference>
<dbReference type="GO" id="GO:0016607">
    <property type="term" value="C:nuclear speck"/>
    <property type="evidence" value="ECO:0007669"/>
    <property type="project" value="UniProtKB-SubCell"/>
</dbReference>
<dbReference type="GO" id="GO:0005634">
    <property type="term" value="C:nucleus"/>
    <property type="evidence" value="ECO:0000318"/>
    <property type="project" value="GO_Central"/>
</dbReference>
<dbReference type="GO" id="GO:0051015">
    <property type="term" value="F:actin filament binding"/>
    <property type="evidence" value="ECO:0000250"/>
    <property type="project" value="UniProtKB"/>
</dbReference>
<dbReference type="GO" id="GO:0003785">
    <property type="term" value="F:actin monomer binding"/>
    <property type="evidence" value="ECO:0000250"/>
    <property type="project" value="UniProtKB"/>
</dbReference>
<dbReference type="GO" id="GO:0048813">
    <property type="term" value="P:dendrite morphogenesis"/>
    <property type="evidence" value="ECO:0000250"/>
    <property type="project" value="UniProtKB"/>
</dbReference>
<dbReference type="GO" id="GO:0030833">
    <property type="term" value="P:regulation of actin filament polymerization"/>
    <property type="evidence" value="ECO:0000250"/>
    <property type="project" value="UniProtKB"/>
</dbReference>
<dbReference type="GO" id="GO:0051489">
    <property type="term" value="P:regulation of filopodium assembly"/>
    <property type="evidence" value="ECO:0000250"/>
    <property type="project" value="UniProtKB"/>
</dbReference>
<dbReference type="FunFam" id="2.40.50.100:FF:000048">
    <property type="entry name" value="Protein Abitram"/>
    <property type="match status" value="1"/>
</dbReference>
<dbReference type="Gene3D" id="2.40.50.100">
    <property type="match status" value="1"/>
</dbReference>
<dbReference type="InterPro" id="IPR039169">
    <property type="entry name" value="Abitram"/>
</dbReference>
<dbReference type="InterPro" id="IPR033753">
    <property type="entry name" value="GCV_H/Fam206"/>
</dbReference>
<dbReference type="InterPro" id="IPR011053">
    <property type="entry name" value="Single_hybrid_motif"/>
</dbReference>
<dbReference type="PANTHER" id="PTHR13651">
    <property type="entry name" value="PROTEIN ABITRAM"/>
    <property type="match status" value="1"/>
</dbReference>
<dbReference type="PANTHER" id="PTHR13651:SF0">
    <property type="entry name" value="PROTEIN ABITRAM"/>
    <property type="match status" value="1"/>
</dbReference>
<dbReference type="Pfam" id="PF01597">
    <property type="entry name" value="GCV_H"/>
    <property type="match status" value="1"/>
</dbReference>
<dbReference type="SUPFAM" id="SSF51230">
    <property type="entry name" value="Single hybrid motif"/>
    <property type="match status" value="1"/>
</dbReference>
<accession>Q29S16</accession>
<organism>
    <name type="scientific">Bos taurus</name>
    <name type="common">Bovine</name>
    <dbReference type="NCBI Taxonomy" id="9913"/>
    <lineage>
        <taxon>Eukaryota</taxon>
        <taxon>Metazoa</taxon>
        <taxon>Chordata</taxon>
        <taxon>Craniata</taxon>
        <taxon>Vertebrata</taxon>
        <taxon>Euteleostomi</taxon>
        <taxon>Mammalia</taxon>
        <taxon>Eutheria</taxon>
        <taxon>Laurasiatheria</taxon>
        <taxon>Artiodactyla</taxon>
        <taxon>Ruminantia</taxon>
        <taxon>Pecora</taxon>
        <taxon>Bovidae</taxon>
        <taxon>Bovinae</taxon>
        <taxon>Bos</taxon>
    </lineage>
</organism>
<evidence type="ECO:0000250" key="1">
    <source>
        <dbReference type="UniProtKB" id="Q80ZQ9"/>
    </source>
</evidence>
<evidence type="ECO:0000305" key="2"/>
<feature type="chain" id="PRO_0000291927" description="Protein Abitram">
    <location>
        <begin position="1"/>
        <end position="187"/>
    </location>
</feature>
<protein>
    <recommendedName>
        <fullName evidence="2">Protein Abitram</fullName>
    </recommendedName>
    <alternativeName>
        <fullName>Actin-binding transcription modulator</fullName>
    </alternativeName>
    <alternativeName>
        <fullName>Protein Simiate</fullName>
    </alternativeName>
</protein>
<name>ABITM_BOVIN</name>
<keyword id="KW-0009">Actin-binding</keyword>
<keyword id="KW-0966">Cell projection</keyword>
<keyword id="KW-0539">Nucleus</keyword>
<keyword id="KW-1185">Reference proteome</keyword>
<gene>
    <name type="primary">ABITRAM</name>
    <name type="synonym">FAM206A</name>
</gene>